<feature type="chain" id="PRO_0000176299" description="Elongation factor 4">
    <location>
        <begin position="1"/>
        <end position="598"/>
    </location>
</feature>
<feature type="domain" description="tr-type G">
    <location>
        <begin position="4"/>
        <end position="181"/>
    </location>
</feature>
<feature type="binding site" evidence="1">
    <location>
        <begin position="16"/>
        <end position="21"/>
    </location>
    <ligand>
        <name>GTP</name>
        <dbReference type="ChEBI" id="CHEBI:37565"/>
    </ligand>
</feature>
<feature type="binding site" evidence="1">
    <location>
        <begin position="128"/>
        <end position="131"/>
    </location>
    <ligand>
        <name>GTP</name>
        <dbReference type="ChEBI" id="CHEBI:37565"/>
    </ligand>
</feature>
<feature type="sequence conflict" description="In Ref. 2." evidence="2" ref="2">
    <original>A</original>
    <variation>T</variation>
    <location>
        <position position="152"/>
    </location>
</feature>
<evidence type="ECO:0000255" key="1">
    <source>
        <dbReference type="HAMAP-Rule" id="MF_00071"/>
    </source>
</evidence>
<evidence type="ECO:0000305" key="2"/>
<proteinExistence type="inferred from homology"/>
<protein>
    <recommendedName>
        <fullName evidence="1">Elongation factor 4</fullName>
        <shortName evidence="1">EF-4</shortName>
        <ecNumber evidence="1">3.6.5.n1</ecNumber>
    </recommendedName>
    <alternativeName>
        <fullName evidence="1">Ribosomal back-translocase LepA</fullName>
    </alternativeName>
</protein>
<dbReference type="EC" id="3.6.5.n1" evidence="1"/>
<dbReference type="EMBL" id="AE017332">
    <property type="protein sequence ID" value="AAV27401.1"/>
    <property type="molecule type" value="Genomic_DNA"/>
</dbReference>
<dbReference type="EMBL" id="AF046228">
    <property type="protein sequence ID" value="AAC98966.1"/>
    <property type="status" value="ALT_FRAME"/>
    <property type="molecule type" value="Genomic_DNA"/>
</dbReference>
<dbReference type="RefSeq" id="WP_011205917.1">
    <property type="nucleotide sequence ID" value="NC_006360.1"/>
</dbReference>
<dbReference type="SMR" id="Q9ZHZ8"/>
<dbReference type="KEGG" id="mhy:mhp079"/>
<dbReference type="eggNOG" id="COG0481">
    <property type="taxonomic scope" value="Bacteria"/>
</dbReference>
<dbReference type="HOGENOM" id="CLU_009995_3_3_14"/>
<dbReference type="PhylomeDB" id="Q9ZHZ8"/>
<dbReference type="Proteomes" id="UP000006822">
    <property type="component" value="Chromosome"/>
</dbReference>
<dbReference type="GO" id="GO:0005886">
    <property type="term" value="C:plasma membrane"/>
    <property type="evidence" value="ECO:0007669"/>
    <property type="project" value="UniProtKB-SubCell"/>
</dbReference>
<dbReference type="GO" id="GO:0005525">
    <property type="term" value="F:GTP binding"/>
    <property type="evidence" value="ECO:0007669"/>
    <property type="project" value="UniProtKB-UniRule"/>
</dbReference>
<dbReference type="GO" id="GO:0003924">
    <property type="term" value="F:GTPase activity"/>
    <property type="evidence" value="ECO:0007669"/>
    <property type="project" value="UniProtKB-UniRule"/>
</dbReference>
<dbReference type="GO" id="GO:0043022">
    <property type="term" value="F:ribosome binding"/>
    <property type="evidence" value="ECO:0007669"/>
    <property type="project" value="UniProtKB-UniRule"/>
</dbReference>
<dbReference type="GO" id="GO:0003746">
    <property type="term" value="F:translation elongation factor activity"/>
    <property type="evidence" value="ECO:0007669"/>
    <property type="project" value="UniProtKB-UniRule"/>
</dbReference>
<dbReference type="GO" id="GO:0045727">
    <property type="term" value="P:positive regulation of translation"/>
    <property type="evidence" value="ECO:0007669"/>
    <property type="project" value="UniProtKB-UniRule"/>
</dbReference>
<dbReference type="CDD" id="cd03699">
    <property type="entry name" value="EF4_II"/>
    <property type="match status" value="1"/>
</dbReference>
<dbReference type="CDD" id="cd16260">
    <property type="entry name" value="EF4_III"/>
    <property type="match status" value="1"/>
</dbReference>
<dbReference type="CDD" id="cd01890">
    <property type="entry name" value="LepA"/>
    <property type="match status" value="1"/>
</dbReference>
<dbReference type="CDD" id="cd03709">
    <property type="entry name" value="lepA_C"/>
    <property type="match status" value="1"/>
</dbReference>
<dbReference type="FunFam" id="3.40.50.300:FF:000078">
    <property type="entry name" value="Elongation factor 4"/>
    <property type="match status" value="1"/>
</dbReference>
<dbReference type="FunFam" id="2.40.30.10:FF:000015">
    <property type="entry name" value="Translation factor GUF1, mitochondrial"/>
    <property type="match status" value="1"/>
</dbReference>
<dbReference type="FunFam" id="3.30.70.240:FF:000007">
    <property type="entry name" value="Translation factor GUF1, mitochondrial"/>
    <property type="match status" value="1"/>
</dbReference>
<dbReference type="FunFam" id="3.30.70.2570:FF:000001">
    <property type="entry name" value="Translation factor GUF1, mitochondrial"/>
    <property type="match status" value="1"/>
</dbReference>
<dbReference type="FunFam" id="3.30.70.870:FF:000004">
    <property type="entry name" value="Translation factor GUF1, mitochondrial"/>
    <property type="match status" value="1"/>
</dbReference>
<dbReference type="Gene3D" id="3.30.70.240">
    <property type="match status" value="1"/>
</dbReference>
<dbReference type="Gene3D" id="3.30.70.2570">
    <property type="entry name" value="Elongation factor 4, C-terminal domain"/>
    <property type="match status" value="1"/>
</dbReference>
<dbReference type="Gene3D" id="3.30.70.870">
    <property type="entry name" value="Elongation Factor G (Translational Gtpase), domain 3"/>
    <property type="match status" value="1"/>
</dbReference>
<dbReference type="Gene3D" id="3.40.50.300">
    <property type="entry name" value="P-loop containing nucleotide triphosphate hydrolases"/>
    <property type="match status" value="1"/>
</dbReference>
<dbReference type="Gene3D" id="2.40.30.10">
    <property type="entry name" value="Translation factors"/>
    <property type="match status" value="1"/>
</dbReference>
<dbReference type="HAMAP" id="MF_00071">
    <property type="entry name" value="LepA"/>
    <property type="match status" value="1"/>
</dbReference>
<dbReference type="InterPro" id="IPR006297">
    <property type="entry name" value="EF-4"/>
</dbReference>
<dbReference type="InterPro" id="IPR035647">
    <property type="entry name" value="EFG_III/V"/>
</dbReference>
<dbReference type="InterPro" id="IPR000640">
    <property type="entry name" value="EFG_V-like"/>
</dbReference>
<dbReference type="InterPro" id="IPR004161">
    <property type="entry name" value="EFTu-like_2"/>
</dbReference>
<dbReference type="InterPro" id="IPR031157">
    <property type="entry name" value="G_TR_CS"/>
</dbReference>
<dbReference type="InterPro" id="IPR038363">
    <property type="entry name" value="LepA_C_sf"/>
</dbReference>
<dbReference type="InterPro" id="IPR013842">
    <property type="entry name" value="LepA_CTD"/>
</dbReference>
<dbReference type="InterPro" id="IPR035654">
    <property type="entry name" value="LepA_IV"/>
</dbReference>
<dbReference type="InterPro" id="IPR027417">
    <property type="entry name" value="P-loop_NTPase"/>
</dbReference>
<dbReference type="InterPro" id="IPR005225">
    <property type="entry name" value="Small_GTP-bd"/>
</dbReference>
<dbReference type="InterPro" id="IPR000795">
    <property type="entry name" value="T_Tr_GTP-bd_dom"/>
</dbReference>
<dbReference type="InterPro" id="IPR009000">
    <property type="entry name" value="Transl_B-barrel_sf"/>
</dbReference>
<dbReference type="NCBIfam" id="TIGR01393">
    <property type="entry name" value="lepA"/>
    <property type="match status" value="1"/>
</dbReference>
<dbReference type="NCBIfam" id="TIGR00231">
    <property type="entry name" value="small_GTP"/>
    <property type="match status" value="1"/>
</dbReference>
<dbReference type="PANTHER" id="PTHR43512:SF4">
    <property type="entry name" value="TRANSLATION FACTOR GUF1 HOMOLOG, CHLOROPLASTIC"/>
    <property type="match status" value="1"/>
</dbReference>
<dbReference type="PANTHER" id="PTHR43512">
    <property type="entry name" value="TRANSLATION FACTOR GUF1-RELATED"/>
    <property type="match status" value="1"/>
</dbReference>
<dbReference type="Pfam" id="PF00679">
    <property type="entry name" value="EFG_C"/>
    <property type="match status" value="1"/>
</dbReference>
<dbReference type="Pfam" id="PF00009">
    <property type="entry name" value="GTP_EFTU"/>
    <property type="match status" value="1"/>
</dbReference>
<dbReference type="Pfam" id="PF03144">
    <property type="entry name" value="GTP_EFTU_D2"/>
    <property type="match status" value="1"/>
</dbReference>
<dbReference type="Pfam" id="PF06421">
    <property type="entry name" value="LepA_C"/>
    <property type="match status" value="1"/>
</dbReference>
<dbReference type="PRINTS" id="PR00315">
    <property type="entry name" value="ELONGATNFCT"/>
</dbReference>
<dbReference type="SUPFAM" id="SSF54980">
    <property type="entry name" value="EF-G C-terminal domain-like"/>
    <property type="match status" value="2"/>
</dbReference>
<dbReference type="SUPFAM" id="SSF52540">
    <property type="entry name" value="P-loop containing nucleoside triphosphate hydrolases"/>
    <property type="match status" value="1"/>
</dbReference>
<dbReference type="SUPFAM" id="SSF50447">
    <property type="entry name" value="Translation proteins"/>
    <property type="match status" value="1"/>
</dbReference>
<dbReference type="PROSITE" id="PS00301">
    <property type="entry name" value="G_TR_1"/>
    <property type="match status" value="1"/>
</dbReference>
<dbReference type="PROSITE" id="PS51722">
    <property type="entry name" value="G_TR_2"/>
    <property type="match status" value="1"/>
</dbReference>
<keyword id="KW-1003">Cell membrane</keyword>
<keyword id="KW-0342">GTP-binding</keyword>
<keyword id="KW-0378">Hydrolase</keyword>
<keyword id="KW-0472">Membrane</keyword>
<keyword id="KW-0547">Nucleotide-binding</keyword>
<keyword id="KW-0648">Protein biosynthesis</keyword>
<sequence length="598" mass="67341">MDNKKIRNFAIIAHIDHGKSTLADRILEFTNTVSKRDLKEQHLDSMDLEKERGITIKLNAVQIRYNSYIFHLIDTPGHVDFTYEVSRSLAATEGALLLVDASQGIQAQTLANVYLALENNLEIIPIINKIDLPSANVDKVKAEIENTIGISAENAILISAKNGIGIEKVLEAIVNLIPPPQASDEKDPLKALVFDSYFDIYRGVIIFIRVVTGKISVGDTFKFMANNLKFSVIELGISSPNQVKKEALFAGEVGWVAASIRNAKDVEVGDTITLVENPAKSPLPGYKKLVPVMYTGFYPVDSQQYNLLKDSLEKISLSDSSIIYEPESSKALGFGFRIGFLGLLHMEILQERLEREFNLSIIATAPSVEFQITRTNGQVQIISNPSLFPEPNFISEIREPYILAKIFLPEEFLGQIMGLCQDKRGIYVDLEYIDDFRRRLIYKLPLVEVIFDFFDRLKSLSKGYASFEYEVIDYQVSKLQKLDILLNGQKIDALSMIVHKDFAYPKARDLTQKLKEIIPRHSFEVPVQAVIGSKVIARETIKAYRKDVTAKLYGGDVTRRKKLLEKQKAGKKRMKSFGVVDVPQEAFLAILKTNINEK</sequence>
<accession>Q9ZHZ8</accession>
<accession>Q601X2</accession>
<reference key="1">
    <citation type="journal article" date="2004" name="J. Bacteriol.">
        <title>The genome sequence of Mycoplasma hyopneumoniae strain 232, the agent of swine mycoplasmosis.</title>
        <authorList>
            <person name="Minion F.C."/>
            <person name="Lefkowitz E.J."/>
            <person name="Madsen M.L."/>
            <person name="Cleary B.J."/>
            <person name="Swartzell S.M."/>
            <person name="Mahairas G.G."/>
        </authorList>
    </citation>
    <scope>NUCLEOTIDE SEQUENCE [LARGE SCALE GENOMIC DNA]</scope>
    <source>
        <strain>232</strain>
    </source>
</reference>
<reference key="2">
    <citation type="submission" date="1998-02" db="EMBL/GenBank/DDBJ databases">
        <authorList>
            <person name="Lin H.N."/>
            <person name="Shiuan D."/>
        </authorList>
    </citation>
    <scope>NUCLEOTIDE SEQUENCE [GENOMIC DNA] OF 1-173</scope>
</reference>
<gene>
    <name evidence="1" type="primary">lepA</name>
    <name type="ordered locus">mhp079</name>
</gene>
<name>LEPA_MESH2</name>
<organism>
    <name type="scientific">Mesomycoplasma hyopneumoniae (strain 232)</name>
    <name type="common">Mycoplasma hyopneumoniae</name>
    <dbReference type="NCBI Taxonomy" id="295358"/>
    <lineage>
        <taxon>Bacteria</taxon>
        <taxon>Bacillati</taxon>
        <taxon>Mycoplasmatota</taxon>
        <taxon>Mycoplasmoidales</taxon>
        <taxon>Metamycoplasmataceae</taxon>
        <taxon>Mesomycoplasma</taxon>
    </lineage>
</organism>
<comment type="function">
    <text evidence="1">Required for accurate and efficient protein synthesis under certain stress conditions. May act as a fidelity factor of the translation reaction, by catalyzing a one-codon backward translocation of tRNAs on improperly translocated ribosomes. Back-translocation proceeds from a post-translocation (POST) complex to a pre-translocation (PRE) complex, thus giving elongation factor G a second chance to translocate the tRNAs correctly. Binds to ribosomes in a GTP-dependent manner.</text>
</comment>
<comment type="catalytic activity">
    <reaction evidence="1">
        <text>GTP + H2O = GDP + phosphate + H(+)</text>
        <dbReference type="Rhea" id="RHEA:19669"/>
        <dbReference type="ChEBI" id="CHEBI:15377"/>
        <dbReference type="ChEBI" id="CHEBI:15378"/>
        <dbReference type="ChEBI" id="CHEBI:37565"/>
        <dbReference type="ChEBI" id="CHEBI:43474"/>
        <dbReference type="ChEBI" id="CHEBI:58189"/>
        <dbReference type="EC" id="3.6.5.n1"/>
    </reaction>
</comment>
<comment type="subcellular location">
    <subcellularLocation>
        <location evidence="1">Cell membrane</location>
        <topology evidence="1">Peripheral membrane protein</topology>
        <orientation evidence="1">Cytoplasmic side</orientation>
    </subcellularLocation>
</comment>
<comment type="similarity">
    <text evidence="1">Belongs to the TRAFAC class translation factor GTPase superfamily. Classic translation factor GTPase family. LepA subfamily.</text>
</comment>
<comment type="sequence caution" evidence="2">
    <conflict type="frameshift">
        <sequence resource="EMBL-CDS" id="AAC98966"/>
    </conflict>
</comment>